<evidence type="ECO:0000255" key="1">
    <source>
        <dbReference type="HAMAP-Rule" id="MF_01014"/>
    </source>
</evidence>
<reference key="1">
    <citation type="submission" date="2007-07" db="EMBL/GenBank/DDBJ databases">
        <title>Complete genome sequence of Campylobacter hominis ATCC BAA-381, a commensal isolated from the human gastrointestinal tract.</title>
        <authorList>
            <person name="Fouts D.E."/>
            <person name="Mongodin E.F."/>
            <person name="Puiu D."/>
            <person name="Sebastian Y."/>
            <person name="Miller W.G."/>
            <person name="Mandrell R.E."/>
            <person name="Nelson K.E."/>
        </authorList>
    </citation>
    <scope>NUCLEOTIDE SEQUENCE [LARGE SCALE GENOMIC DNA]</scope>
    <source>
        <strain>ATCC BAA-381 / DSM 21671 / CCUG 45161 / LMG 19568 / NCTC 13146 / CH001A</strain>
    </source>
</reference>
<organism>
    <name type="scientific">Campylobacter hominis (strain ATCC BAA-381 / DSM 21671 / CCUG 45161 / LMG 19568 / NCTC 13146 / CH001A)</name>
    <dbReference type="NCBI Taxonomy" id="360107"/>
    <lineage>
        <taxon>Bacteria</taxon>
        <taxon>Pseudomonadati</taxon>
        <taxon>Campylobacterota</taxon>
        <taxon>Epsilonproteobacteria</taxon>
        <taxon>Campylobacterales</taxon>
        <taxon>Campylobacteraceae</taxon>
        <taxon>Campylobacter</taxon>
    </lineage>
</organism>
<accession>A7I1W6</accession>
<protein>
    <recommendedName>
        <fullName evidence="1">1-(5-phosphoribosyl)-5-[(5-phosphoribosylamino)methylideneamino] imidazole-4-carboxamide isomerase</fullName>
        <ecNumber evidence="1">5.3.1.16</ecNumber>
    </recommendedName>
    <alternativeName>
        <fullName evidence="1">Phosphoribosylformimino-5-aminoimidazole carboxamide ribotide isomerase</fullName>
    </alternativeName>
</protein>
<keyword id="KW-0028">Amino-acid biosynthesis</keyword>
<keyword id="KW-0963">Cytoplasm</keyword>
<keyword id="KW-0368">Histidine biosynthesis</keyword>
<keyword id="KW-0413">Isomerase</keyword>
<keyword id="KW-1185">Reference proteome</keyword>
<proteinExistence type="inferred from homology"/>
<sequence length="236" mass="25489">MEILPAIDLKNGFAVRLKKGEMNSAKIYSDKPWELAEKFADLGAKWLHIVDLDGAFAGEAKNAKTIEKIVKSTNLKIEVGGGIRDEERIKFYKNSGVSRFILGSAALKNPEFVKQMAKKYKIAVGIDAKNGFVATEGWAEVSNIKACELAKIYADAGVEAIICTDISKDGMLSGVNVKFSEEIAKSSGIKTIASGGVKDLSDIKALKQSGKIYGVIVGKAYYEGSIDLKEAFLIAK</sequence>
<feature type="chain" id="PRO_1000063198" description="1-(5-phosphoribosyl)-5-[(5-phosphoribosylamino)methylideneamino] imidazole-4-carboxamide isomerase">
    <location>
        <begin position="1"/>
        <end position="236"/>
    </location>
</feature>
<feature type="active site" description="Proton acceptor" evidence="1">
    <location>
        <position position="8"/>
    </location>
</feature>
<feature type="active site" description="Proton donor" evidence="1">
    <location>
        <position position="127"/>
    </location>
</feature>
<dbReference type="EC" id="5.3.1.16" evidence="1"/>
<dbReference type="EMBL" id="CP000776">
    <property type="protein sequence ID" value="ABS51650.1"/>
    <property type="molecule type" value="Genomic_DNA"/>
</dbReference>
<dbReference type="RefSeq" id="WP_012108800.1">
    <property type="nucleotide sequence ID" value="NC_009714.1"/>
</dbReference>
<dbReference type="SMR" id="A7I1W6"/>
<dbReference type="STRING" id="360107.CHAB381_0946"/>
<dbReference type="KEGG" id="cha:CHAB381_0946"/>
<dbReference type="eggNOG" id="COG0106">
    <property type="taxonomic scope" value="Bacteria"/>
</dbReference>
<dbReference type="HOGENOM" id="CLU_048577_1_2_7"/>
<dbReference type="OrthoDB" id="9807749at2"/>
<dbReference type="UniPathway" id="UPA00031">
    <property type="reaction ID" value="UER00009"/>
</dbReference>
<dbReference type="Proteomes" id="UP000002407">
    <property type="component" value="Chromosome"/>
</dbReference>
<dbReference type="GO" id="GO:0005737">
    <property type="term" value="C:cytoplasm"/>
    <property type="evidence" value="ECO:0007669"/>
    <property type="project" value="UniProtKB-SubCell"/>
</dbReference>
<dbReference type="GO" id="GO:0003949">
    <property type="term" value="F:1-(5-phosphoribosyl)-5-[(5-phosphoribosylamino)methylideneamino]imidazole-4-carboxamide isomerase activity"/>
    <property type="evidence" value="ECO:0007669"/>
    <property type="project" value="UniProtKB-UniRule"/>
</dbReference>
<dbReference type="GO" id="GO:0000105">
    <property type="term" value="P:L-histidine biosynthetic process"/>
    <property type="evidence" value="ECO:0007669"/>
    <property type="project" value="UniProtKB-UniRule"/>
</dbReference>
<dbReference type="GO" id="GO:0000162">
    <property type="term" value="P:L-tryptophan biosynthetic process"/>
    <property type="evidence" value="ECO:0007669"/>
    <property type="project" value="TreeGrafter"/>
</dbReference>
<dbReference type="CDD" id="cd04732">
    <property type="entry name" value="HisA"/>
    <property type="match status" value="1"/>
</dbReference>
<dbReference type="FunFam" id="3.20.20.70:FF:000009">
    <property type="entry name" value="1-(5-phosphoribosyl)-5-[(5-phosphoribosylamino)methylideneamino] imidazole-4-carboxamide isomerase"/>
    <property type="match status" value="1"/>
</dbReference>
<dbReference type="Gene3D" id="3.20.20.70">
    <property type="entry name" value="Aldolase class I"/>
    <property type="match status" value="1"/>
</dbReference>
<dbReference type="HAMAP" id="MF_01014">
    <property type="entry name" value="HisA"/>
    <property type="match status" value="1"/>
</dbReference>
<dbReference type="InterPro" id="IPR013785">
    <property type="entry name" value="Aldolase_TIM"/>
</dbReference>
<dbReference type="InterPro" id="IPR006062">
    <property type="entry name" value="His_biosynth"/>
</dbReference>
<dbReference type="InterPro" id="IPR006063">
    <property type="entry name" value="HisA_bact_arch"/>
</dbReference>
<dbReference type="InterPro" id="IPR044524">
    <property type="entry name" value="Isoase_HisA-like"/>
</dbReference>
<dbReference type="InterPro" id="IPR023016">
    <property type="entry name" value="Isoase_HisA-like_bact"/>
</dbReference>
<dbReference type="InterPro" id="IPR011060">
    <property type="entry name" value="RibuloseP-bd_barrel"/>
</dbReference>
<dbReference type="NCBIfam" id="TIGR00007">
    <property type="entry name" value="1-(5-phosphoribosyl)-5-[(5-phosphoribosylamino)methylideneamino]imidazole-4-carboxamide isomerase"/>
    <property type="match status" value="1"/>
</dbReference>
<dbReference type="PANTHER" id="PTHR43090">
    <property type="entry name" value="1-(5-PHOSPHORIBOSYL)-5-[(5-PHOSPHORIBOSYLAMINO)METHYLIDENEAMINO] IMIDAZOLE-4-CARBOXAMIDE ISOMERASE"/>
    <property type="match status" value="1"/>
</dbReference>
<dbReference type="PANTHER" id="PTHR43090:SF2">
    <property type="entry name" value="1-(5-PHOSPHORIBOSYL)-5-[(5-PHOSPHORIBOSYLAMINO)METHYLIDENEAMINO] IMIDAZOLE-4-CARBOXAMIDE ISOMERASE"/>
    <property type="match status" value="1"/>
</dbReference>
<dbReference type="Pfam" id="PF00977">
    <property type="entry name" value="His_biosynth"/>
    <property type="match status" value="1"/>
</dbReference>
<dbReference type="SUPFAM" id="SSF51366">
    <property type="entry name" value="Ribulose-phoshate binding barrel"/>
    <property type="match status" value="1"/>
</dbReference>
<gene>
    <name evidence="1" type="primary">hisA</name>
    <name type="ordered locus">CHAB381_0946</name>
</gene>
<comment type="catalytic activity">
    <reaction evidence="1">
        <text>1-(5-phospho-beta-D-ribosyl)-5-[(5-phospho-beta-D-ribosylamino)methylideneamino]imidazole-4-carboxamide = 5-[(5-phospho-1-deoxy-D-ribulos-1-ylimino)methylamino]-1-(5-phospho-beta-D-ribosyl)imidazole-4-carboxamide</text>
        <dbReference type="Rhea" id="RHEA:15469"/>
        <dbReference type="ChEBI" id="CHEBI:58435"/>
        <dbReference type="ChEBI" id="CHEBI:58525"/>
        <dbReference type="EC" id="5.3.1.16"/>
    </reaction>
</comment>
<comment type="pathway">
    <text evidence="1">Amino-acid biosynthesis; L-histidine biosynthesis; L-histidine from 5-phospho-alpha-D-ribose 1-diphosphate: step 4/9.</text>
</comment>
<comment type="subcellular location">
    <subcellularLocation>
        <location evidence="1">Cytoplasm</location>
    </subcellularLocation>
</comment>
<comment type="similarity">
    <text evidence="1">Belongs to the HisA/HisF family.</text>
</comment>
<name>HIS4_CAMHC</name>